<evidence type="ECO:0000250" key="1">
    <source>
        <dbReference type="UniProtKB" id="Q6PF93"/>
    </source>
</evidence>
<evidence type="ECO:0000250" key="2">
    <source>
        <dbReference type="UniProtKB" id="Q8NEB9"/>
    </source>
</evidence>
<evidence type="ECO:0000250" key="3">
    <source>
        <dbReference type="UniProtKB" id="Q9TXI7"/>
    </source>
</evidence>
<evidence type="ECO:0000255" key="4">
    <source>
        <dbReference type="PROSITE-ProRule" id="PRU00269"/>
    </source>
</evidence>
<evidence type="ECO:0000255" key="5">
    <source>
        <dbReference type="PROSITE-ProRule" id="PRU00878"/>
    </source>
</evidence>
<evidence type="ECO:0000255" key="6">
    <source>
        <dbReference type="PROSITE-ProRule" id="PRU00880"/>
    </source>
</evidence>
<evidence type="ECO:0000256" key="7">
    <source>
        <dbReference type="SAM" id="MobiDB-lite"/>
    </source>
</evidence>
<evidence type="ECO:0000269" key="8">
    <source>
    </source>
</evidence>
<evidence type="ECO:0000312" key="9">
    <source>
        <dbReference type="RGD" id="620899"/>
    </source>
</evidence>
<evidence type="ECO:0007744" key="10">
    <source>
    </source>
</evidence>
<dbReference type="EC" id="2.7.1.137" evidence="2"/>
<dbReference type="EMBL" id="AJ006710">
    <property type="protein sequence ID" value="CAA07199.1"/>
    <property type="molecule type" value="mRNA"/>
</dbReference>
<dbReference type="EMBL" id="BC061981">
    <property type="protein sequence ID" value="AAH61981.1"/>
    <property type="molecule type" value="mRNA"/>
</dbReference>
<dbReference type="RefSeq" id="NP_075247.1">
    <property type="nucleotide sequence ID" value="NM_022958.2"/>
</dbReference>
<dbReference type="SMR" id="O88763"/>
<dbReference type="DIP" id="DIP-60851N"/>
<dbReference type="FunCoup" id="O88763">
    <property type="interactions" value="3506"/>
</dbReference>
<dbReference type="IntAct" id="O88763">
    <property type="interactions" value="3"/>
</dbReference>
<dbReference type="STRING" id="10116.ENSRNOP00000060791"/>
<dbReference type="BindingDB" id="O88763"/>
<dbReference type="ChEMBL" id="CHEMBL5291577"/>
<dbReference type="iPTMnet" id="O88763"/>
<dbReference type="PhosphoSitePlus" id="O88763"/>
<dbReference type="PaxDb" id="10116-ENSRNOP00000060791"/>
<dbReference type="GeneID" id="65052"/>
<dbReference type="KEGG" id="rno:65052"/>
<dbReference type="UCSC" id="RGD:620899">
    <property type="organism name" value="rat"/>
</dbReference>
<dbReference type="AGR" id="RGD:620899"/>
<dbReference type="CTD" id="5289"/>
<dbReference type="RGD" id="620899">
    <property type="gene designation" value="Pik3c3"/>
</dbReference>
<dbReference type="VEuPathDB" id="HostDB:ENSRNOG00000017840"/>
<dbReference type="eggNOG" id="KOG0906">
    <property type="taxonomic scope" value="Eukaryota"/>
</dbReference>
<dbReference type="HOGENOM" id="CLU_004869_0_0_1"/>
<dbReference type="InParanoid" id="O88763"/>
<dbReference type="OrthoDB" id="67688at2759"/>
<dbReference type="PhylomeDB" id="O88763"/>
<dbReference type="Reactome" id="R-RNO-109704">
    <property type="pathway name" value="PI3K Cascade"/>
</dbReference>
<dbReference type="Reactome" id="R-RNO-1632852">
    <property type="pathway name" value="Macroautophagy"/>
</dbReference>
<dbReference type="Reactome" id="R-RNO-1660514">
    <property type="pathway name" value="Synthesis of PIPs at the Golgi membrane"/>
</dbReference>
<dbReference type="Reactome" id="R-RNO-1660516">
    <property type="pathway name" value="Synthesis of PIPs at the early endosome membrane"/>
</dbReference>
<dbReference type="Reactome" id="R-RNO-1660517">
    <property type="pathway name" value="Synthesis of PIPs at the late endosome membrane"/>
</dbReference>
<dbReference type="Reactome" id="R-RNO-168138">
    <property type="pathway name" value="Toll Like Receptor 9 (TLR9) Cascade"/>
</dbReference>
<dbReference type="Reactome" id="R-RNO-5668599">
    <property type="pathway name" value="RHO GTPases Activate NADPH Oxidases"/>
</dbReference>
<dbReference type="PRO" id="PR:O88763"/>
<dbReference type="Proteomes" id="UP000002494">
    <property type="component" value="Chromosome 18"/>
</dbReference>
<dbReference type="Bgee" id="ENSRNOG00000017840">
    <property type="expression patterns" value="Expressed in liver and 19 other cell types or tissues"/>
</dbReference>
<dbReference type="GO" id="GO:0044754">
    <property type="term" value="C:autolysosome"/>
    <property type="evidence" value="ECO:0000266"/>
    <property type="project" value="RGD"/>
</dbReference>
<dbReference type="GO" id="GO:0005776">
    <property type="term" value="C:autophagosome"/>
    <property type="evidence" value="ECO:0007669"/>
    <property type="project" value="UniProtKB-SubCell"/>
</dbReference>
<dbReference type="GO" id="GO:0005930">
    <property type="term" value="C:axoneme"/>
    <property type="evidence" value="ECO:0000250"/>
    <property type="project" value="UniProtKB"/>
</dbReference>
<dbReference type="GO" id="GO:0005737">
    <property type="term" value="C:cytoplasm"/>
    <property type="evidence" value="ECO:0000318"/>
    <property type="project" value="GO_Central"/>
</dbReference>
<dbReference type="GO" id="GO:0005768">
    <property type="term" value="C:endosome"/>
    <property type="evidence" value="ECO:0000318"/>
    <property type="project" value="GO_Central"/>
</dbReference>
<dbReference type="GO" id="GO:0098982">
    <property type="term" value="C:GABA-ergic synapse"/>
    <property type="evidence" value="ECO:0000266"/>
    <property type="project" value="RGD"/>
</dbReference>
<dbReference type="GO" id="GO:0098978">
    <property type="term" value="C:glutamatergic synapse"/>
    <property type="evidence" value="ECO:0000266"/>
    <property type="project" value="RGD"/>
</dbReference>
<dbReference type="GO" id="GO:0005770">
    <property type="term" value="C:late endosome"/>
    <property type="evidence" value="ECO:0000250"/>
    <property type="project" value="UniProtKB"/>
</dbReference>
<dbReference type="GO" id="GO:0016020">
    <property type="term" value="C:membrane"/>
    <property type="evidence" value="ECO:0000318"/>
    <property type="project" value="GO_Central"/>
</dbReference>
<dbReference type="GO" id="GO:0030496">
    <property type="term" value="C:midbody"/>
    <property type="evidence" value="ECO:0000250"/>
    <property type="project" value="UniProtKB"/>
</dbReference>
<dbReference type="GO" id="GO:0005777">
    <property type="term" value="C:peroxisome"/>
    <property type="evidence" value="ECO:0000318"/>
    <property type="project" value="GO_Central"/>
</dbReference>
<dbReference type="GO" id="GO:0045335">
    <property type="term" value="C:phagocytic vesicle"/>
    <property type="evidence" value="ECO:0000266"/>
    <property type="project" value="RGD"/>
</dbReference>
<dbReference type="GO" id="GO:0000407">
    <property type="term" value="C:phagophore assembly site"/>
    <property type="evidence" value="ECO:0000318"/>
    <property type="project" value="GO_Central"/>
</dbReference>
<dbReference type="GO" id="GO:0035032">
    <property type="term" value="C:phosphatidylinositol 3-kinase complex, class III"/>
    <property type="evidence" value="ECO:0000250"/>
    <property type="project" value="UniProtKB"/>
</dbReference>
<dbReference type="GO" id="GO:0034271">
    <property type="term" value="C:phosphatidylinositol 3-kinase complex, class III, type I"/>
    <property type="evidence" value="ECO:0000318"/>
    <property type="project" value="GO_Central"/>
</dbReference>
<dbReference type="GO" id="GO:0034272">
    <property type="term" value="C:phosphatidylinositol 3-kinase complex, class III, type II"/>
    <property type="evidence" value="ECO:0000318"/>
    <property type="project" value="GO_Central"/>
</dbReference>
<dbReference type="GO" id="GO:0098794">
    <property type="term" value="C:postsynapse"/>
    <property type="evidence" value="ECO:0000266"/>
    <property type="project" value="RGD"/>
</dbReference>
<dbReference type="GO" id="GO:0098845">
    <property type="term" value="C:postsynaptic endosome"/>
    <property type="evidence" value="ECO:0000266"/>
    <property type="project" value="RGD"/>
</dbReference>
<dbReference type="GO" id="GO:0098830">
    <property type="term" value="C:presynaptic endosome"/>
    <property type="evidence" value="ECO:0000266"/>
    <property type="project" value="RGD"/>
</dbReference>
<dbReference type="GO" id="GO:0016303">
    <property type="term" value="F:1-phosphatidylinositol-3-kinase activity"/>
    <property type="evidence" value="ECO:0000314"/>
    <property type="project" value="RGD"/>
</dbReference>
<dbReference type="GO" id="GO:0005524">
    <property type="term" value="F:ATP binding"/>
    <property type="evidence" value="ECO:0007669"/>
    <property type="project" value="UniProtKB-KW"/>
</dbReference>
<dbReference type="GO" id="GO:0052742">
    <property type="term" value="F:phosphatidylinositol kinase activity"/>
    <property type="evidence" value="ECO:0000266"/>
    <property type="project" value="RGD"/>
</dbReference>
<dbReference type="GO" id="GO:0004672">
    <property type="term" value="F:protein kinase activity"/>
    <property type="evidence" value="ECO:0000266"/>
    <property type="project" value="RGD"/>
</dbReference>
<dbReference type="GO" id="GO:0000045">
    <property type="term" value="P:autophagosome assembly"/>
    <property type="evidence" value="ECO:0000315"/>
    <property type="project" value="RGD"/>
</dbReference>
<dbReference type="GO" id="GO:0097352">
    <property type="term" value="P:autophagosome maturation"/>
    <property type="evidence" value="ECO:0000266"/>
    <property type="project" value="RGD"/>
</dbReference>
<dbReference type="GO" id="GO:0006914">
    <property type="term" value="P:autophagy"/>
    <property type="evidence" value="ECO:0000266"/>
    <property type="project" value="RGD"/>
</dbReference>
<dbReference type="GO" id="GO:0051301">
    <property type="term" value="P:cell division"/>
    <property type="evidence" value="ECO:0007669"/>
    <property type="project" value="UniProtKB-KW"/>
</dbReference>
<dbReference type="GO" id="GO:0042149">
    <property type="term" value="P:cellular response to glucose starvation"/>
    <property type="evidence" value="ECO:0000250"/>
    <property type="project" value="UniProtKB"/>
</dbReference>
<dbReference type="GO" id="GO:0009267">
    <property type="term" value="P:cellular response to starvation"/>
    <property type="evidence" value="ECO:0000266"/>
    <property type="project" value="RGD"/>
</dbReference>
<dbReference type="GO" id="GO:0045022">
    <property type="term" value="P:early endosome to late endosome transport"/>
    <property type="evidence" value="ECO:0000250"/>
    <property type="project" value="UniProtKB"/>
</dbReference>
<dbReference type="GO" id="GO:0006897">
    <property type="term" value="P:endocytosis"/>
    <property type="evidence" value="ECO:0000318"/>
    <property type="project" value="GO_Central"/>
</dbReference>
<dbReference type="GO" id="GO:0007032">
    <property type="term" value="P:endosome organization"/>
    <property type="evidence" value="ECO:0000315"/>
    <property type="project" value="RGD"/>
</dbReference>
<dbReference type="GO" id="GO:0016236">
    <property type="term" value="P:macroautophagy"/>
    <property type="evidence" value="ECO:0000250"/>
    <property type="project" value="UniProtKB"/>
</dbReference>
<dbReference type="GO" id="GO:0000425">
    <property type="term" value="P:pexophagy"/>
    <property type="evidence" value="ECO:0000318"/>
    <property type="project" value="GO_Central"/>
</dbReference>
<dbReference type="GO" id="GO:0043491">
    <property type="term" value="P:phosphatidylinositol 3-kinase/protein kinase B signal transduction"/>
    <property type="evidence" value="ECO:0000315"/>
    <property type="project" value="RGD"/>
</dbReference>
<dbReference type="GO" id="GO:0046854">
    <property type="term" value="P:phosphatidylinositol phosphate biosynthetic process"/>
    <property type="evidence" value="ECO:0000266"/>
    <property type="project" value="RGD"/>
</dbReference>
<dbReference type="GO" id="GO:0036092">
    <property type="term" value="P:phosphatidylinositol-3-phosphate biosynthetic process"/>
    <property type="evidence" value="ECO:0000266"/>
    <property type="project" value="RGD"/>
</dbReference>
<dbReference type="GO" id="GO:0048015">
    <property type="term" value="P:phosphatidylinositol-mediated signaling"/>
    <property type="evidence" value="ECO:0000318"/>
    <property type="project" value="GO_Central"/>
</dbReference>
<dbReference type="GO" id="GO:0044829">
    <property type="term" value="P:positive regulation by host of viral genome replication"/>
    <property type="evidence" value="ECO:0007669"/>
    <property type="project" value="Ensembl"/>
</dbReference>
<dbReference type="GO" id="GO:0034497">
    <property type="term" value="P:protein localization to phagophore assembly site"/>
    <property type="evidence" value="ECO:0000266"/>
    <property type="project" value="RGD"/>
</dbReference>
<dbReference type="GO" id="GO:0016485">
    <property type="term" value="P:protein processing"/>
    <property type="evidence" value="ECO:0000315"/>
    <property type="project" value="RGD"/>
</dbReference>
<dbReference type="GO" id="GO:0010506">
    <property type="term" value="P:regulation of autophagy"/>
    <property type="evidence" value="ECO:0000266"/>
    <property type="project" value="RGD"/>
</dbReference>
<dbReference type="GO" id="GO:0032465">
    <property type="term" value="P:regulation of cytokinesis"/>
    <property type="evidence" value="ECO:0000250"/>
    <property type="project" value="UniProtKB"/>
</dbReference>
<dbReference type="GO" id="GO:0016241">
    <property type="term" value="P:regulation of macroautophagy"/>
    <property type="evidence" value="ECO:0000266"/>
    <property type="project" value="RGD"/>
</dbReference>
<dbReference type="GO" id="GO:0043201">
    <property type="term" value="P:response to L-leucine"/>
    <property type="evidence" value="ECO:0000270"/>
    <property type="project" value="RGD"/>
</dbReference>
<dbReference type="GO" id="GO:0048488">
    <property type="term" value="P:synaptic vesicle endocytosis"/>
    <property type="evidence" value="ECO:0000266"/>
    <property type="project" value="RGD"/>
</dbReference>
<dbReference type="CDD" id="cd08397">
    <property type="entry name" value="C2_PI3K_class_III"/>
    <property type="match status" value="1"/>
</dbReference>
<dbReference type="CDD" id="cd00870">
    <property type="entry name" value="PI3Ka_III"/>
    <property type="match status" value="1"/>
</dbReference>
<dbReference type="CDD" id="cd00896">
    <property type="entry name" value="PI3Kc_III"/>
    <property type="match status" value="1"/>
</dbReference>
<dbReference type="FunFam" id="1.10.1070.11:FF:000002">
    <property type="entry name" value="Phosphatidylinositol 3-kinase catalytic subunit type 3"/>
    <property type="match status" value="1"/>
</dbReference>
<dbReference type="FunFam" id="1.25.40.70:FF:000003">
    <property type="entry name" value="Phosphatidylinositol 3-kinase catalytic subunit type 3"/>
    <property type="match status" value="1"/>
</dbReference>
<dbReference type="FunFam" id="2.60.40.150:FF:000043">
    <property type="entry name" value="Phosphatidylinositol 3-kinase catalytic subunit type 3"/>
    <property type="match status" value="1"/>
</dbReference>
<dbReference type="FunFam" id="3.30.1010.10:FF:000002">
    <property type="entry name" value="Phosphatidylinositol 3-kinase catalytic subunit type 3"/>
    <property type="match status" value="1"/>
</dbReference>
<dbReference type="Gene3D" id="2.60.40.150">
    <property type="entry name" value="C2 domain"/>
    <property type="match status" value="1"/>
</dbReference>
<dbReference type="Gene3D" id="1.10.1070.11">
    <property type="entry name" value="Phosphatidylinositol 3-/4-kinase, catalytic domain"/>
    <property type="match status" value="1"/>
</dbReference>
<dbReference type="Gene3D" id="3.30.1010.10">
    <property type="entry name" value="Phosphatidylinositol 3-kinase Catalytic Subunit, Chain A, domain 4"/>
    <property type="match status" value="1"/>
</dbReference>
<dbReference type="Gene3D" id="1.25.40.70">
    <property type="entry name" value="Phosphatidylinositol 3-kinase, accessory domain (PIK)"/>
    <property type="match status" value="1"/>
</dbReference>
<dbReference type="InterPro" id="IPR016024">
    <property type="entry name" value="ARM-type_fold"/>
</dbReference>
<dbReference type="InterPro" id="IPR035892">
    <property type="entry name" value="C2_domain_sf"/>
</dbReference>
<dbReference type="InterPro" id="IPR011009">
    <property type="entry name" value="Kinase-like_dom_sf"/>
</dbReference>
<dbReference type="InterPro" id="IPR000403">
    <property type="entry name" value="PI3/4_kinase_cat_dom"/>
</dbReference>
<dbReference type="InterPro" id="IPR036940">
    <property type="entry name" value="PI3/4_kinase_cat_sf"/>
</dbReference>
<dbReference type="InterPro" id="IPR018936">
    <property type="entry name" value="PI3/4_kinase_CS"/>
</dbReference>
<dbReference type="InterPro" id="IPR002420">
    <property type="entry name" value="PI3K-type_C2_dom"/>
</dbReference>
<dbReference type="InterPro" id="IPR001263">
    <property type="entry name" value="PI3K_accessory_dom"/>
</dbReference>
<dbReference type="InterPro" id="IPR042236">
    <property type="entry name" value="PI3K_accessory_sf"/>
</dbReference>
<dbReference type="InterPro" id="IPR008290">
    <property type="entry name" value="PI3K_Vps34"/>
</dbReference>
<dbReference type="InterPro" id="IPR015433">
    <property type="entry name" value="PI_Kinase"/>
</dbReference>
<dbReference type="PANTHER" id="PTHR10048:SF7">
    <property type="entry name" value="PHOSPHATIDYLINOSITOL 3-KINASE CATALYTIC SUBUNIT TYPE 3"/>
    <property type="match status" value="1"/>
</dbReference>
<dbReference type="PANTHER" id="PTHR10048">
    <property type="entry name" value="PHOSPHATIDYLINOSITOL KINASE"/>
    <property type="match status" value="1"/>
</dbReference>
<dbReference type="Pfam" id="PF00454">
    <property type="entry name" value="PI3_PI4_kinase"/>
    <property type="match status" value="1"/>
</dbReference>
<dbReference type="Pfam" id="PF00792">
    <property type="entry name" value="PI3K_C2"/>
    <property type="match status" value="1"/>
</dbReference>
<dbReference type="Pfam" id="PF00613">
    <property type="entry name" value="PI3Ka"/>
    <property type="match status" value="1"/>
</dbReference>
<dbReference type="PIRSF" id="PIRSF000587">
    <property type="entry name" value="PI3K_Vps34"/>
    <property type="match status" value="1"/>
</dbReference>
<dbReference type="SMART" id="SM00142">
    <property type="entry name" value="PI3K_C2"/>
    <property type="match status" value="1"/>
</dbReference>
<dbReference type="SMART" id="SM00145">
    <property type="entry name" value="PI3Ka"/>
    <property type="match status" value="1"/>
</dbReference>
<dbReference type="SMART" id="SM00146">
    <property type="entry name" value="PI3Kc"/>
    <property type="match status" value="1"/>
</dbReference>
<dbReference type="SUPFAM" id="SSF48371">
    <property type="entry name" value="ARM repeat"/>
    <property type="match status" value="1"/>
</dbReference>
<dbReference type="SUPFAM" id="SSF49562">
    <property type="entry name" value="C2 domain (Calcium/lipid-binding domain, CaLB)"/>
    <property type="match status" value="1"/>
</dbReference>
<dbReference type="SUPFAM" id="SSF56112">
    <property type="entry name" value="Protein kinase-like (PK-like)"/>
    <property type="match status" value="1"/>
</dbReference>
<dbReference type="PROSITE" id="PS51547">
    <property type="entry name" value="C2_PI3K"/>
    <property type="match status" value="1"/>
</dbReference>
<dbReference type="PROSITE" id="PS00915">
    <property type="entry name" value="PI3_4_KINASE_1"/>
    <property type="match status" value="1"/>
</dbReference>
<dbReference type="PROSITE" id="PS00916">
    <property type="entry name" value="PI3_4_KINASE_2"/>
    <property type="match status" value="1"/>
</dbReference>
<dbReference type="PROSITE" id="PS50290">
    <property type="entry name" value="PI3_4_KINASE_3"/>
    <property type="match status" value="1"/>
</dbReference>
<dbReference type="PROSITE" id="PS51545">
    <property type="entry name" value="PIK_HELICAL"/>
    <property type="match status" value="1"/>
</dbReference>
<proteinExistence type="evidence at protein level"/>
<keyword id="KW-0067">ATP-binding</keyword>
<keyword id="KW-0072">Autophagy</keyword>
<keyword id="KW-0131">Cell cycle</keyword>
<keyword id="KW-0132">Cell division</keyword>
<keyword id="KW-0968">Cytoplasmic vesicle</keyword>
<keyword id="KW-0967">Endosome</keyword>
<keyword id="KW-0418">Kinase</keyword>
<keyword id="KW-0443">Lipid metabolism</keyword>
<keyword id="KW-0464">Manganese</keyword>
<keyword id="KW-0547">Nucleotide-binding</keyword>
<keyword id="KW-0597">Phosphoprotein</keyword>
<keyword id="KW-1185">Reference proteome</keyword>
<keyword id="KW-0808">Transferase</keyword>
<keyword id="KW-0832">Ubl conjugation</keyword>
<comment type="function">
    <text evidence="2 8">Catalytic subunit of the PI3K complex that mediates formation of phosphatidylinositol 3-phosphate; different complex forms are believed to play a role in multiple membrane trafficking pathways: PI3KC3-C1 is involved in initiation of autophagosomes and PI3KC3-C2 in maturation of autophagosomes and endocytosis. As part of PI3KC3-C1, promotes endoplasmic reticulum membrane curvature formation prior to vesicle budding. Involved in regulation of degradative endocytic trafficking and required for the abscission step in cytokinesis, probably in the context of PI3KC3-C2 (By similarity). Involved in the transport of lysosomal enzyme precursors to lysosomes (PubMed:11171063). Required for transport from early to late endosomes (PubMed:11171063).</text>
</comment>
<comment type="catalytic activity">
    <reaction evidence="2">
        <text>a 1,2-diacyl-sn-glycero-3-phospho-(1D-myo-inositol) + ATP = a 1,2-diacyl-sn-glycero-3-phospho-(1D-myo-inositol-3-phosphate) + ADP + H(+)</text>
        <dbReference type="Rhea" id="RHEA:12709"/>
        <dbReference type="ChEBI" id="CHEBI:15378"/>
        <dbReference type="ChEBI" id="CHEBI:30616"/>
        <dbReference type="ChEBI" id="CHEBI:57880"/>
        <dbReference type="ChEBI" id="CHEBI:58088"/>
        <dbReference type="ChEBI" id="CHEBI:456216"/>
        <dbReference type="EC" id="2.7.1.137"/>
    </reaction>
    <physiologicalReaction direction="left-to-right" evidence="2">
        <dbReference type="Rhea" id="RHEA:12710"/>
    </physiologicalReaction>
</comment>
<comment type="cofactor">
    <cofactor evidence="2">
        <name>Mn(2+)</name>
        <dbReference type="ChEBI" id="CHEBI:29035"/>
    </cofactor>
</comment>
<comment type="subunit">
    <text evidence="1 2 3">Component of the PI3K (PI3KC3/PI3K-III/class III phosphatidylinositol 3-kinase) complex the core of which is composed of the catalytic subunit PIK3C3, the regulatory subunit PIK3R4 and BECN1 associating with additional regulatory/auxiliary subunits to form alternative complex forms. Alternative complex forms containing a fourth regulatory subunit in a mutually exclusive manner are: the PI3K complex I (PI3KC3-C1) containing ATG14, and the PI3K complex II (PI3KC3-C2) containing UVRAG. PI3KC3-C1 displays a V-shaped architecture with PIK3R4 serving as a bridge between PIK3C3 and the ATG14:BECN1 subcomplex. Both, PI3KC3-C1 and PI3KC3-C2, can associate with further regulatory subunits such as RUBCN, SH3GLB1/Bif-1 and AMBRA1. PI3KC3-C1 probably associates with PIK3CB. Interacts with RAB7A in the presence of PIK3R4. Interacts with AMBRA1. Interacts with BECN1P1/BECN2. Interacts with SLAMF1. May interact with DYN2. May be a component of a complex composed of RAB5A (in GDP-bound form), DYN2 and PIK3C3 (By similarity). Interacts with NCKAP1L (By similarity). Interacts with ATG14; this interaction is increased in the absence of TMEM39A (By similarity). Interacts with STEEP1; the interaction is STING1-dependent and required for trafficking of STING1 from the endoplasmic reticulum (By similarity). Interacts with YWHAG (By similarity). Interacts with ARMC3 (By similarity).</text>
</comment>
<comment type="subcellular location">
    <subcellularLocation>
        <location evidence="2">Midbody</location>
    </subcellularLocation>
    <subcellularLocation>
        <location evidence="2">Late endosome</location>
    </subcellularLocation>
    <subcellularLocation>
        <location evidence="2">Cytoplasmic vesicle</location>
        <location evidence="2">Autophagosome</location>
    </subcellularLocation>
    <text evidence="1 2">As component of the PI3K complex I localized to pre-autophagosome structures. As component of the PI3K complex II localized predominantly to endosomes (By similarity). Also localizes to discrete punctae along the ciliary axoneme and to the base of the ciliary axoneme (By similarity).</text>
</comment>
<comment type="PTM">
    <text evidence="2">Ubiquitinated via 'Lys-29'- and 'Lys-48'-linked ubiquitination by UBE3C, promoting its degradation. Deubiquitination by ZRANB1/TRABID promotes its stabilization, leading to autophagosome maturation.</text>
</comment>
<comment type="similarity">
    <text evidence="6">Belongs to the PI3/PI4-kinase family.</text>
</comment>
<name>PK3C3_RAT</name>
<sequence length="887" mass="101534">MGEAEKFHYIYSCDLDINVQLKIGSLEGKREQKSYKAVLEDPMLKFSGLYQETCSDLYVTCQVFAEGKPLALPVRTSYKPFSTRWNWNEWLKLPVKYPDLPRNAQVALTIWDVYGPGRAVPVGGTTVSLFGKYGMFRQGMHDLKVWPNVEADGSEPTRTPGRTSSTLSEDQMSRLAKLTKAHRQGHMVKVDWLDRLTFREIEMINESEKRSSNFMYLMVEFRCVKCDDKEYGIVYYEKDGDESSPILTSFELVKVPDPQMSMENLVESKHHKLARSLRSGPSDHDLKPNATTRDQLNIIVSYPPTKQLTYEEQDLVWKFRYYLTNQEKALTKFLKCVNWDLPQEAKQALELLGKWKPMDVEDSLELLSSHYTNPTVRRYAVARLRQADDEDLLMYLLQLVQALKYENFDDIKNGLEPTKKDSQASVSESLSSSGVSSADIDSSQIITNPLPPVASPPPASKSKEVSDGENLEQDLCTFLISRACKNSTLANYLYWYVIVECEDQDTQQRDPKTHEMYLNVMRRFSQALLKGDKSVRVMRSLLAAQQTFVDRLVHLMKAVQRESGNRKKKNERLQALLGDNEKMNLSDVELIPLPLEPQVKIRGIIPETATLFKSALMPAQLFFKTEDGGKYPVIFKHGDDLRQDQLILQIISLMDKLLRKENLDLKLTPYKVLATSTKHGFMQFIQSVPVAEVLDTEGSIQNFFRKYAPSETGPNGISAEVMDTYVKSCAGYCVITYILGVGDRHLDNLLLTKTGKLFHIDFGYILGRDPKPLPPPMKLNKEMVEGMGGTQSEQYQEFRKQCYTAFLHLRRYSNLILNLFSLMVDANIPDIALEPDKTVKKVQDKFRLDLSDEEAVHYMQSLIDESVHALFAAVVEQIHKFAQYWRK</sequence>
<reference key="1">
    <citation type="journal article" date="2001" name="Biochem. J.">
        <title>Overexpression of a rat kinase-deficient phosphoinositide 3-kinase, Vps34p, inhibits cathepsin D maturation.</title>
        <authorList>
            <person name="Row P.E."/>
            <person name="Reaves B.J."/>
            <person name="Domin J."/>
            <person name="Luzio J.P."/>
            <person name="Davidson H.W."/>
        </authorList>
    </citation>
    <scope>NUCLEOTIDE SEQUENCE [MRNA]</scope>
    <scope>FUNCTION</scope>
    <source>
        <tissue>Liver</tissue>
    </source>
</reference>
<reference key="2">
    <citation type="journal article" date="2004" name="Genome Res.">
        <title>The status, quality, and expansion of the NIH full-length cDNA project: the Mammalian Gene Collection (MGC).</title>
        <authorList>
            <consortium name="The MGC Project Team"/>
        </authorList>
    </citation>
    <scope>NUCLEOTIDE SEQUENCE [LARGE SCALE MRNA]</scope>
    <source>
        <tissue>Prostate</tissue>
    </source>
</reference>
<reference key="3">
    <citation type="journal article" date="2012" name="Nat. Commun.">
        <title>Quantitative maps of protein phosphorylation sites across 14 different rat organs and tissues.</title>
        <authorList>
            <person name="Lundby A."/>
            <person name="Secher A."/>
            <person name="Lage K."/>
            <person name="Nordsborg N.B."/>
            <person name="Dmytriyev A."/>
            <person name="Lundby C."/>
            <person name="Olsen J.V."/>
        </authorList>
    </citation>
    <scope>PHOSPHORYLATION [LARGE SCALE ANALYSIS] AT SER-244</scope>
    <scope>IDENTIFICATION BY MASS SPECTROMETRY [LARGE SCALE ANALYSIS]</scope>
</reference>
<protein>
    <recommendedName>
        <fullName>Phosphatidylinositol 3-kinase catalytic subunit type 3</fullName>
        <shortName>PI3-kinase type 3</shortName>
        <shortName>PI3K type 3</shortName>
        <shortName>PtdIns-3-kinase type 3</shortName>
        <ecNumber evidence="2">2.7.1.137</ecNumber>
    </recommendedName>
    <alternativeName>
        <fullName>Phosphoinositide-3-kinase class 3</fullName>
    </alternativeName>
</protein>
<organism>
    <name type="scientific">Rattus norvegicus</name>
    <name type="common">Rat</name>
    <dbReference type="NCBI Taxonomy" id="10116"/>
    <lineage>
        <taxon>Eukaryota</taxon>
        <taxon>Metazoa</taxon>
        <taxon>Chordata</taxon>
        <taxon>Craniata</taxon>
        <taxon>Vertebrata</taxon>
        <taxon>Euteleostomi</taxon>
        <taxon>Mammalia</taxon>
        <taxon>Eutheria</taxon>
        <taxon>Euarchontoglires</taxon>
        <taxon>Glires</taxon>
        <taxon>Rodentia</taxon>
        <taxon>Myomorpha</taxon>
        <taxon>Muroidea</taxon>
        <taxon>Muridae</taxon>
        <taxon>Murinae</taxon>
        <taxon>Rattus</taxon>
    </lineage>
</organism>
<accession>O88763</accession>
<feature type="chain" id="PRO_0000088805" description="Phosphatidylinositol 3-kinase catalytic subunit type 3">
    <location>
        <begin position="1"/>
        <end position="887"/>
    </location>
</feature>
<feature type="domain" description="C2 PI3K-type" evidence="6">
    <location>
        <begin position="35"/>
        <end position="184"/>
    </location>
</feature>
<feature type="domain" description="PIK helical" evidence="5">
    <location>
        <begin position="283"/>
        <end position="520"/>
    </location>
</feature>
<feature type="domain" description="PI3K/PI4K catalytic" evidence="4">
    <location>
        <begin position="605"/>
        <end position="871"/>
    </location>
</feature>
<feature type="region of interest" description="Disordered" evidence="7">
    <location>
        <begin position="149"/>
        <end position="170"/>
    </location>
</feature>
<feature type="region of interest" description="Disordered" evidence="7">
    <location>
        <begin position="416"/>
        <end position="467"/>
    </location>
</feature>
<feature type="region of interest" description="G-loop" evidence="4">
    <location>
        <begin position="611"/>
        <end position="617"/>
    </location>
</feature>
<feature type="region of interest" description="Catalytic loop" evidence="4">
    <location>
        <begin position="740"/>
        <end position="748"/>
    </location>
</feature>
<feature type="region of interest" description="Activation loop" evidence="4">
    <location>
        <begin position="759"/>
        <end position="780"/>
    </location>
</feature>
<feature type="compositionally biased region" description="Polar residues" evidence="7">
    <location>
        <begin position="156"/>
        <end position="170"/>
    </location>
</feature>
<feature type="compositionally biased region" description="Low complexity" evidence="7">
    <location>
        <begin position="423"/>
        <end position="444"/>
    </location>
</feature>
<feature type="compositionally biased region" description="Pro residues" evidence="7">
    <location>
        <begin position="449"/>
        <end position="459"/>
    </location>
</feature>
<feature type="modified residue" description="Phosphothreonine; by AMPK" evidence="1">
    <location>
        <position position="163"/>
    </location>
</feature>
<feature type="modified residue" description="Phosphoserine; by AMPK" evidence="1">
    <location>
        <position position="165"/>
    </location>
</feature>
<feature type="modified residue" description="Phosphoserine" evidence="10">
    <location>
        <position position="244"/>
    </location>
</feature>
<feature type="modified residue" description="Phosphoserine" evidence="2">
    <location>
        <position position="261"/>
    </location>
</feature>
<feature type="modified residue" description="Phosphoserine" evidence="2">
    <location>
        <position position="282"/>
    </location>
</feature>
<gene>
    <name evidence="9" type="primary">Pik3c3</name>
    <name type="synonym">Vps34</name>
</gene>